<organism>
    <name type="scientific">Dictyostelium discoideum</name>
    <name type="common">Social amoeba</name>
    <dbReference type="NCBI Taxonomy" id="44689"/>
    <lineage>
        <taxon>Eukaryota</taxon>
        <taxon>Amoebozoa</taxon>
        <taxon>Evosea</taxon>
        <taxon>Eumycetozoa</taxon>
        <taxon>Dictyostelia</taxon>
        <taxon>Dictyosteliales</taxon>
        <taxon>Dictyosteliaceae</taxon>
        <taxon>Dictyostelium</taxon>
    </lineage>
</organism>
<dbReference type="EMBL" id="AAFI02000023">
    <property type="protein sequence ID" value="EAL68340.1"/>
    <property type="molecule type" value="Genomic_DNA"/>
</dbReference>
<dbReference type="RefSeq" id="XP_642297.1">
    <property type="nucleotide sequence ID" value="XM_637205.1"/>
</dbReference>
<dbReference type="SMR" id="Q54YA5"/>
<dbReference type="FunCoup" id="Q54YA5">
    <property type="interactions" value="29"/>
</dbReference>
<dbReference type="STRING" id="44689.Q54YA5"/>
<dbReference type="PaxDb" id="44689-DDB0233515"/>
<dbReference type="EnsemblProtists" id="EAL68340">
    <property type="protein sequence ID" value="EAL68340"/>
    <property type="gene ID" value="DDB_G0278335"/>
</dbReference>
<dbReference type="GeneID" id="8621504"/>
<dbReference type="KEGG" id="ddi:DDB_G0278335"/>
<dbReference type="dictyBase" id="DDB_G0278335">
    <property type="gene designation" value="snrpC"/>
</dbReference>
<dbReference type="VEuPathDB" id="AmoebaDB:DDB_G0278335"/>
<dbReference type="eggNOG" id="KOG3454">
    <property type="taxonomic scope" value="Eukaryota"/>
</dbReference>
<dbReference type="HOGENOM" id="CLU_1542882_0_0_1"/>
<dbReference type="InParanoid" id="Q54YA5"/>
<dbReference type="OMA" id="QEMHEKN"/>
<dbReference type="PRO" id="PR:Q54YA5"/>
<dbReference type="Proteomes" id="UP000002195">
    <property type="component" value="Chromosome 3"/>
</dbReference>
<dbReference type="GO" id="GO:0000243">
    <property type="term" value="C:commitment complex"/>
    <property type="evidence" value="ECO:0007669"/>
    <property type="project" value="UniProtKB-UniRule"/>
</dbReference>
<dbReference type="GO" id="GO:0005685">
    <property type="term" value="C:U1 snRNP"/>
    <property type="evidence" value="ECO:0000250"/>
    <property type="project" value="dictyBase"/>
</dbReference>
<dbReference type="GO" id="GO:0071004">
    <property type="term" value="C:U2-type prespliceosome"/>
    <property type="evidence" value="ECO:0007669"/>
    <property type="project" value="UniProtKB-UniRule"/>
</dbReference>
<dbReference type="GO" id="GO:0003729">
    <property type="term" value="F:mRNA binding"/>
    <property type="evidence" value="ECO:0007669"/>
    <property type="project" value="UniProtKB-UniRule"/>
</dbReference>
<dbReference type="GO" id="GO:0030627">
    <property type="term" value="F:pre-mRNA 5'-splice site binding"/>
    <property type="evidence" value="ECO:0000318"/>
    <property type="project" value="GO_Central"/>
</dbReference>
<dbReference type="GO" id="GO:0030619">
    <property type="term" value="F:U1 snRNA binding"/>
    <property type="evidence" value="ECO:0007669"/>
    <property type="project" value="UniProtKB-UniRule"/>
</dbReference>
<dbReference type="GO" id="GO:0008270">
    <property type="term" value="F:zinc ion binding"/>
    <property type="evidence" value="ECO:0007669"/>
    <property type="project" value="UniProtKB-UniRule"/>
</dbReference>
<dbReference type="GO" id="GO:0000395">
    <property type="term" value="P:mRNA 5'-splice site recognition"/>
    <property type="evidence" value="ECO:0000318"/>
    <property type="project" value="GO_Central"/>
</dbReference>
<dbReference type="GO" id="GO:0000387">
    <property type="term" value="P:spliceosomal snRNP assembly"/>
    <property type="evidence" value="ECO:0007669"/>
    <property type="project" value="UniProtKB-UniRule"/>
</dbReference>
<dbReference type="FunFam" id="3.30.160.60:FF:000890">
    <property type="entry name" value="U1 small nuclear ribonucleoprotein C"/>
    <property type="match status" value="1"/>
</dbReference>
<dbReference type="Gene3D" id="3.30.160.60">
    <property type="entry name" value="Classic Zinc Finger"/>
    <property type="match status" value="1"/>
</dbReference>
<dbReference type="HAMAP" id="MF_03153">
    <property type="entry name" value="U1_C"/>
    <property type="match status" value="1"/>
</dbReference>
<dbReference type="InterPro" id="IPR000690">
    <property type="entry name" value="Matrin/U1-C_Znf_C2H2"/>
</dbReference>
<dbReference type="InterPro" id="IPR003604">
    <property type="entry name" value="Matrin/U1-like-C_Znf_C2H2"/>
</dbReference>
<dbReference type="InterPro" id="IPR013085">
    <property type="entry name" value="U1-CZ_Znf_C2H2"/>
</dbReference>
<dbReference type="InterPro" id="IPR017340">
    <property type="entry name" value="U1_snRNP-C"/>
</dbReference>
<dbReference type="InterPro" id="IPR036236">
    <property type="entry name" value="Znf_C2H2_sf"/>
</dbReference>
<dbReference type="PANTHER" id="PTHR31148">
    <property type="entry name" value="U1 SMALL NUCLEAR RIBONUCLEOPROTEIN C"/>
    <property type="match status" value="1"/>
</dbReference>
<dbReference type="PANTHER" id="PTHR31148:SF1">
    <property type="entry name" value="U1 SMALL NUCLEAR RIBONUCLEOPROTEIN C"/>
    <property type="match status" value="1"/>
</dbReference>
<dbReference type="Pfam" id="PF06220">
    <property type="entry name" value="zf-U1"/>
    <property type="match status" value="1"/>
</dbReference>
<dbReference type="PIRSF" id="PIRSF037969">
    <property type="entry name" value="U1_snRNP-C"/>
    <property type="match status" value="1"/>
</dbReference>
<dbReference type="SMART" id="SM00451">
    <property type="entry name" value="ZnF_U1"/>
    <property type="match status" value="1"/>
</dbReference>
<dbReference type="SUPFAM" id="SSF57667">
    <property type="entry name" value="beta-beta-alpha zinc fingers"/>
    <property type="match status" value="1"/>
</dbReference>
<dbReference type="PROSITE" id="PS50171">
    <property type="entry name" value="ZF_MATRIN"/>
    <property type="match status" value="1"/>
</dbReference>
<proteinExistence type="inferred from homology"/>
<sequence length="174" mass="20657">MPKYYCDYCDKYLTHDSPSVRKSHTVGKQHKLAVQLFYQQFEAEFTQSLIEARLKEYEESKGRLIHQPPMGIIPTPYGQMYQQQQQQQQQQGILPFQGMQPPPHQQQGMVLSPGMPIHKMQPHQFNNNNNPHQQHSFQPPHHQHHPHQQHQQHQQHQHQHQHQQQHNQPTIPGL</sequence>
<gene>
    <name evidence="1" type="primary">snrpC</name>
    <name type="ORF">DDB_G0278335</name>
</gene>
<reference key="1">
    <citation type="journal article" date="2005" name="Nature">
        <title>The genome of the social amoeba Dictyostelium discoideum.</title>
        <authorList>
            <person name="Eichinger L."/>
            <person name="Pachebat J.A."/>
            <person name="Gloeckner G."/>
            <person name="Rajandream M.A."/>
            <person name="Sucgang R."/>
            <person name="Berriman M."/>
            <person name="Song J."/>
            <person name="Olsen R."/>
            <person name="Szafranski K."/>
            <person name="Xu Q."/>
            <person name="Tunggal B."/>
            <person name="Kummerfeld S."/>
            <person name="Madera M."/>
            <person name="Konfortov B.A."/>
            <person name="Rivero F."/>
            <person name="Bankier A.T."/>
            <person name="Lehmann R."/>
            <person name="Hamlin N."/>
            <person name="Davies R."/>
            <person name="Gaudet P."/>
            <person name="Fey P."/>
            <person name="Pilcher K."/>
            <person name="Chen G."/>
            <person name="Saunders D."/>
            <person name="Sodergren E.J."/>
            <person name="Davis P."/>
            <person name="Kerhornou A."/>
            <person name="Nie X."/>
            <person name="Hall N."/>
            <person name="Anjard C."/>
            <person name="Hemphill L."/>
            <person name="Bason N."/>
            <person name="Farbrother P."/>
            <person name="Desany B."/>
            <person name="Just E."/>
            <person name="Morio T."/>
            <person name="Rost R."/>
            <person name="Churcher C.M."/>
            <person name="Cooper J."/>
            <person name="Haydock S."/>
            <person name="van Driessche N."/>
            <person name="Cronin A."/>
            <person name="Goodhead I."/>
            <person name="Muzny D.M."/>
            <person name="Mourier T."/>
            <person name="Pain A."/>
            <person name="Lu M."/>
            <person name="Harper D."/>
            <person name="Lindsay R."/>
            <person name="Hauser H."/>
            <person name="James K.D."/>
            <person name="Quiles M."/>
            <person name="Madan Babu M."/>
            <person name="Saito T."/>
            <person name="Buchrieser C."/>
            <person name="Wardroper A."/>
            <person name="Felder M."/>
            <person name="Thangavelu M."/>
            <person name="Johnson D."/>
            <person name="Knights A."/>
            <person name="Loulseged H."/>
            <person name="Mungall K.L."/>
            <person name="Oliver K."/>
            <person name="Price C."/>
            <person name="Quail M.A."/>
            <person name="Urushihara H."/>
            <person name="Hernandez J."/>
            <person name="Rabbinowitsch E."/>
            <person name="Steffen D."/>
            <person name="Sanders M."/>
            <person name="Ma J."/>
            <person name="Kohara Y."/>
            <person name="Sharp S."/>
            <person name="Simmonds M.N."/>
            <person name="Spiegler S."/>
            <person name="Tivey A."/>
            <person name="Sugano S."/>
            <person name="White B."/>
            <person name="Walker D."/>
            <person name="Woodward J.R."/>
            <person name="Winckler T."/>
            <person name="Tanaka Y."/>
            <person name="Shaulsky G."/>
            <person name="Schleicher M."/>
            <person name="Weinstock G.M."/>
            <person name="Rosenthal A."/>
            <person name="Cox E.C."/>
            <person name="Chisholm R.L."/>
            <person name="Gibbs R.A."/>
            <person name="Loomis W.F."/>
            <person name="Platzer M."/>
            <person name="Kay R.R."/>
            <person name="Williams J.G."/>
            <person name="Dear P.H."/>
            <person name="Noegel A.A."/>
            <person name="Barrell B.G."/>
            <person name="Kuspa A."/>
        </authorList>
    </citation>
    <scope>NUCLEOTIDE SEQUENCE [LARGE SCALE GENOMIC DNA]</scope>
    <source>
        <strain>AX4</strain>
    </source>
</reference>
<evidence type="ECO:0000255" key="1">
    <source>
        <dbReference type="HAMAP-Rule" id="MF_03153"/>
    </source>
</evidence>
<evidence type="ECO:0000256" key="2">
    <source>
        <dbReference type="SAM" id="MobiDB-lite"/>
    </source>
</evidence>
<accession>Q54YA5</accession>
<keyword id="KW-0479">Metal-binding</keyword>
<keyword id="KW-0539">Nucleus</keyword>
<keyword id="KW-1185">Reference proteome</keyword>
<keyword id="KW-0687">Ribonucleoprotein</keyword>
<keyword id="KW-0694">RNA-binding</keyword>
<keyword id="KW-0862">Zinc</keyword>
<keyword id="KW-0863">Zinc-finger</keyword>
<comment type="function">
    <text evidence="1">Component of the spliceosomal U1 snRNP, which is essential for recognition of the pre-mRNA 5' splice-site and the subsequent assembly of the spliceosome. SNRPC/U1-C is directly involved in initial 5' splice-site recognition for both constitutive and regulated alternative splicing. The interaction with the 5' splice-site seems to precede base-pairing between the pre-mRNA and the U1 snRNA. Stimulates commitment or early (E) complex formation by stabilizing the base pairing of the 5' end of the U1 snRNA and the 5' splice-site region.</text>
</comment>
<comment type="subunit">
    <text evidence="1">Component of the U1 snRNP. The U1 snRNP is composed of the U1 snRNA and the 7 core Sm proteins SNRPB, SNRPD1, SNRPD2, SNRPD3, SNRPE, SNRPF and SNRPG that assemble in a heptameric protein ring on the Sm site of the small nuclear RNA to form the core snRNP, and at least 3 U1 snRNP-specific proteins SNRNP70/U1-70K, SNRPA/U1-A and SNRPC/U1-C. SNRPC/U1-C interacts with U1 snRNA and the 5' splice-site region of the pre-mRNA.</text>
</comment>
<comment type="subcellular location">
    <subcellularLocation>
        <location evidence="1">Nucleus</location>
    </subcellularLocation>
</comment>
<comment type="similarity">
    <text evidence="1">Belongs to the U1 small nuclear ribonucleoprotein C family.</text>
</comment>
<name>RU1C_DICDI</name>
<feature type="chain" id="PRO_0000328518" description="U1 small nuclear ribonucleoprotein C">
    <location>
        <begin position="1"/>
        <end position="174"/>
    </location>
</feature>
<feature type="zinc finger region" description="Matrin-type" evidence="1">
    <location>
        <begin position="4"/>
        <end position="36"/>
    </location>
</feature>
<feature type="region of interest" description="Disordered" evidence="2">
    <location>
        <begin position="82"/>
        <end position="174"/>
    </location>
</feature>
<feature type="compositionally biased region" description="Low complexity" evidence="2">
    <location>
        <begin position="82"/>
        <end position="109"/>
    </location>
</feature>
<feature type="compositionally biased region" description="Low complexity" evidence="2">
    <location>
        <begin position="122"/>
        <end position="140"/>
    </location>
</feature>
<feature type="compositionally biased region" description="Basic residues" evidence="2">
    <location>
        <begin position="141"/>
        <end position="163"/>
    </location>
</feature>
<feature type="compositionally biased region" description="Low complexity" evidence="2">
    <location>
        <begin position="164"/>
        <end position="174"/>
    </location>
</feature>
<protein>
    <recommendedName>
        <fullName evidence="1">U1 small nuclear ribonucleoprotein C</fullName>
        <shortName evidence="1">U1 snRNP C</shortName>
        <shortName evidence="1">U1-C</shortName>
        <shortName evidence="1">U1C</shortName>
    </recommendedName>
</protein>